<evidence type="ECO:0000255" key="1">
    <source>
        <dbReference type="HAMAP-Rule" id="MF_00041"/>
    </source>
</evidence>
<evidence type="ECO:0000305" key="2"/>
<keyword id="KW-0030">Aminoacyl-tRNA synthetase</keyword>
<keyword id="KW-0067">ATP-binding</keyword>
<keyword id="KW-0963">Cytoplasm</keyword>
<keyword id="KW-0436">Ligase</keyword>
<keyword id="KW-0479">Metal-binding</keyword>
<keyword id="KW-0547">Nucleotide-binding</keyword>
<keyword id="KW-0648">Protein biosynthesis</keyword>
<keyword id="KW-0862">Zinc</keyword>
<comment type="catalytic activity">
    <reaction evidence="1">
        <text>tRNA(Cys) + L-cysteine + ATP = L-cysteinyl-tRNA(Cys) + AMP + diphosphate</text>
        <dbReference type="Rhea" id="RHEA:17773"/>
        <dbReference type="Rhea" id="RHEA-COMP:9661"/>
        <dbReference type="Rhea" id="RHEA-COMP:9679"/>
        <dbReference type="ChEBI" id="CHEBI:30616"/>
        <dbReference type="ChEBI" id="CHEBI:33019"/>
        <dbReference type="ChEBI" id="CHEBI:35235"/>
        <dbReference type="ChEBI" id="CHEBI:78442"/>
        <dbReference type="ChEBI" id="CHEBI:78517"/>
        <dbReference type="ChEBI" id="CHEBI:456215"/>
        <dbReference type="EC" id="6.1.1.16"/>
    </reaction>
</comment>
<comment type="cofactor">
    <cofactor evidence="1">
        <name>Zn(2+)</name>
        <dbReference type="ChEBI" id="CHEBI:29105"/>
    </cofactor>
    <text evidence="1">Binds 1 zinc ion per subunit.</text>
</comment>
<comment type="subunit">
    <text evidence="1">Monomer.</text>
</comment>
<comment type="subcellular location">
    <subcellularLocation>
        <location evidence="1">Cytoplasm</location>
    </subcellularLocation>
</comment>
<comment type="similarity">
    <text evidence="1">Belongs to the class-I aminoacyl-tRNA synthetase family.</text>
</comment>
<comment type="sequence caution" evidence="2">
    <conflict type="erroneous initiation">
        <sequence resource="EMBL-CDS" id="ABP59664"/>
    </conflict>
</comment>
<sequence length="461" mass="52214">MLKIFNTLTRQKEEFKPIHAGEVGMYVCGITVYDLCHIGHGRTFVSFDVVSRYLRFLGYTLKYVRNITDIDDKIIKRANENGESFVALVDRMIAEMHKDFDALNILRPDSEPRATHHIHEIIEITEKLIERGHAYVASNGDVMFSVPTDPGYGQLSRQDLEQLQAGARVDVVDVKRNPMDFVLWKTSKEGEPSWPSPWGEGRPGWHIECSAMNCKQLGNHFDIHGGGSDLMFPHHENEIAQSTCAHGGEYVNYWMHSGMVMVDREKMSKSLDNFFTVRDVLKYYDAETVRYFLMSGHYRSQLNYSEENLKQARSALERLYIAVRGTDKSVAPAGGEAFEARFIDVMNDDFNTPEAYSVLFDMAREINRLKVEDVSAANALASHLRKLAAVLGLLEQDPETFLQSGAQNDGDEVAKIEALITARLEARQAKDWAAADAARNRLTEMGIVLEDGPQGTIWRRK</sequence>
<accession>A4W7I4</accession>
<dbReference type="EC" id="6.1.1.16" evidence="1"/>
<dbReference type="EMBL" id="CP000653">
    <property type="protein sequence ID" value="ABP59664.1"/>
    <property type="status" value="ALT_INIT"/>
    <property type="molecule type" value="Genomic_DNA"/>
</dbReference>
<dbReference type="RefSeq" id="WP_041689309.1">
    <property type="nucleotide sequence ID" value="NC_009436.1"/>
</dbReference>
<dbReference type="SMR" id="A4W7I4"/>
<dbReference type="STRING" id="399742.Ent638_0980"/>
<dbReference type="KEGG" id="ent:Ent638_0980"/>
<dbReference type="eggNOG" id="COG0215">
    <property type="taxonomic scope" value="Bacteria"/>
</dbReference>
<dbReference type="HOGENOM" id="CLU_013528_0_1_6"/>
<dbReference type="OrthoDB" id="9815130at2"/>
<dbReference type="Proteomes" id="UP000000230">
    <property type="component" value="Chromosome"/>
</dbReference>
<dbReference type="GO" id="GO:0005829">
    <property type="term" value="C:cytosol"/>
    <property type="evidence" value="ECO:0007669"/>
    <property type="project" value="TreeGrafter"/>
</dbReference>
<dbReference type="GO" id="GO:0005524">
    <property type="term" value="F:ATP binding"/>
    <property type="evidence" value="ECO:0007669"/>
    <property type="project" value="UniProtKB-UniRule"/>
</dbReference>
<dbReference type="GO" id="GO:0004817">
    <property type="term" value="F:cysteine-tRNA ligase activity"/>
    <property type="evidence" value="ECO:0007669"/>
    <property type="project" value="UniProtKB-UniRule"/>
</dbReference>
<dbReference type="GO" id="GO:0008270">
    <property type="term" value="F:zinc ion binding"/>
    <property type="evidence" value="ECO:0007669"/>
    <property type="project" value="UniProtKB-UniRule"/>
</dbReference>
<dbReference type="GO" id="GO:0006423">
    <property type="term" value="P:cysteinyl-tRNA aminoacylation"/>
    <property type="evidence" value="ECO:0007669"/>
    <property type="project" value="UniProtKB-UniRule"/>
</dbReference>
<dbReference type="CDD" id="cd07963">
    <property type="entry name" value="Anticodon_Ia_Cys"/>
    <property type="match status" value="1"/>
</dbReference>
<dbReference type="CDD" id="cd00672">
    <property type="entry name" value="CysRS_core"/>
    <property type="match status" value="1"/>
</dbReference>
<dbReference type="FunFam" id="1.20.120.1910:FF:000001">
    <property type="entry name" value="Cysteine--tRNA ligase"/>
    <property type="match status" value="1"/>
</dbReference>
<dbReference type="FunFam" id="3.40.50.620:FF:000009">
    <property type="entry name" value="Cysteine--tRNA ligase"/>
    <property type="match status" value="1"/>
</dbReference>
<dbReference type="Gene3D" id="1.20.120.1910">
    <property type="entry name" value="Cysteine-tRNA ligase, C-terminal anti-codon recognition domain"/>
    <property type="match status" value="1"/>
</dbReference>
<dbReference type="Gene3D" id="3.40.50.620">
    <property type="entry name" value="HUPs"/>
    <property type="match status" value="1"/>
</dbReference>
<dbReference type="HAMAP" id="MF_00041">
    <property type="entry name" value="Cys_tRNA_synth"/>
    <property type="match status" value="1"/>
</dbReference>
<dbReference type="InterPro" id="IPR015803">
    <property type="entry name" value="Cys-tRNA-ligase"/>
</dbReference>
<dbReference type="InterPro" id="IPR015273">
    <property type="entry name" value="Cys-tRNA-synt_Ia_DALR"/>
</dbReference>
<dbReference type="InterPro" id="IPR024909">
    <property type="entry name" value="Cys-tRNA/MSH_ligase"/>
</dbReference>
<dbReference type="InterPro" id="IPR056411">
    <property type="entry name" value="CysS_C"/>
</dbReference>
<dbReference type="InterPro" id="IPR014729">
    <property type="entry name" value="Rossmann-like_a/b/a_fold"/>
</dbReference>
<dbReference type="InterPro" id="IPR032678">
    <property type="entry name" value="tRNA-synt_1_cat_dom"/>
</dbReference>
<dbReference type="InterPro" id="IPR009080">
    <property type="entry name" value="tRNAsynth_Ia_anticodon-bd"/>
</dbReference>
<dbReference type="NCBIfam" id="TIGR00435">
    <property type="entry name" value="cysS"/>
    <property type="match status" value="1"/>
</dbReference>
<dbReference type="PANTHER" id="PTHR10890:SF3">
    <property type="entry name" value="CYSTEINE--TRNA LIGASE, CYTOPLASMIC"/>
    <property type="match status" value="1"/>
</dbReference>
<dbReference type="PANTHER" id="PTHR10890">
    <property type="entry name" value="CYSTEINYL-TRNA SYNTHETASE"/>
    <property type="match status" value="1"/>
</dbReference>
<dbReference type="Pfam" id="PF23493">
    <property type="entry name" value="CysS_C"/>
    <property type="match status" value="1"/>
</dbReference>
<dbReference type="Pfam" id="PF09190">
    <property type="entry name" value="DALR_2"/>
    <property type="match status" value="1"/>
</dbReference>
<dbReference type="Pfam" id="PF01406">
    <property type="entry name" value="tRNA-synt_1e"/>
    <property type="match status" value="1"/>
</dbReference>
<dbReference type="PRINTS" id="PR00983">
    <property type="entry name" value="TRNASYNTHCYS"/>
</dbReference>
<dbReference type="SMART" id="SM00840">
    <property type="entry name" value="DALR_2"/>
    <property type="match status" value="1"/>
</dbReference>
<dbReference type="SUPFAM" id="SSF47323">
    <property type="entry name" value="Anticodon-binding domain of a subclass of class I aminoacyl-tRNA synthetases"/>
    <property type="match status" value="1"/>
</dbReference>
<dbReference type="SUPFAM" id="SSF52374">
    <property type="entry name" value="Nucleotidylyl transferase"/>
    <property type="match status" value="1"/>
</dbReference>
<proteinExistence type="inferred from homology"/>
<organism>
    <name type="scientific">Enterobacter sp. (strain 638)</name>
    <dbReference type="NCBI Taxonomy" id="399742"/>
    <lineage>
        <taxon>Bacteria</taxon>
        <taxon>Pseudomonadati</taxon>
        <taxon>Pseudomonadota</taxon>
        <taxon>Gammaproteobacteria</taxon>
        <taxon>Enterobacterales</taxon>
        <taxon>Enterobacteriaceae</taxon>
        <taxon>Enterobacter</taxon>
    </lineage>
</organism>
<name>SYC_ENT38</name>
<feature type="chain" id="PRO_0000332818" description="Cysteine--tRNA ligase">
    <location>
        <begin position="1"/>
        <end position="461"/>
    </location>
</feature>
<feature type="short sequence motif" description="'HIGH' region">
    <location>
        <begin position="30"/>
        <end position="40"/>
    </location>
</feature>
<feature type="short sequence motif" description="'KMSKS' region">
    <location>
        <begin position="266"/>
        <end position="270"/>
    </location>
</feature>
<feature type="binding site" evidence="1">
    <location>
        <position position="28"/>
    </location>
    <ligand>
        <name>Zn(2+)</name>
        <dbReference type="ChEBI" id="CHEBI:29105"/>
    </ligand>
</feature>
<feature type="binding site" evidence="1">
    <location>
        <position position="209"/>
    </location>
    <ligand>
        <name>Zn(2+)</name>
        <dbReference type="ChEBI" id="CHEBI:29105"/>
    </ligand>
</feature>
<feature type="binding site" evidence="1">
    <location>
        <position position="234"/>
    </location>
    <ligand>
        <name>Zn(2+)</name>
        <dbReference type="ChEBI" id="CHEBI:29105"/>
    </ligand>
</feature>
<feature type="binding site" evidence="1">
    <location>
        <position position="238"/>
    </location>
    <ligand>
        <name>Zn(2+)</name>
        <dbReference type="ChEBI" id="CHEBI:29105"/>
    </ligand>
</feature>
<feature type="binding site" evidence="1">
    <location>
        <position position="269"/>
    </location>
    <ligand>
        <name>ATP</name>
        <dbReference type="ChEBI" id="CHEBI:30616"/>
    </ligand>
</feature>
<gene>
    <name evidence="1" type="primary">cysS</name>
    <name type="ordered locus">Ent638_0980</name>
</gene>
<protein>
    <recommendedName>
        <fullName evidence="1">Cysteine--tRNA ligase</fullName>
        <ecNumber evidence="1">6.1.1.16</ecNumber>
    </recommendedName>
    <alternativeName>
        <fullName evidence="1">Cysteinyl-tRNA synthetase</fullName>
        <shortName evidence="1">CysRS</shortName>
    </alternativeName>
</protein>
<reference key="1">
    <citation type="journal article" date="2010" name="PLoS Genet.">
        <title>Genome sequence of the plant growth promoting endophytic bacterium Enterobacter sp. 638.</title>
        <authorList>
            <person name="Taghavi S."/>
            <person name="van der Lelie D."/>
            <person name="Hoffman A."/>
            <person name="Zhang Y.B."/>
            <person name="Walla M.D."/>
            <person name="Vangronsveld J."/>
            <person name="Newman L."/>
            <person name="Monchy S."/>
        </authorList>
    </citation>
    <scope>NUCLEOTIDE SEQUENCE [LARGE SCALE GENOMIC DNA]</scope>
    <source>
        <strain>638</strain>
    </source>
</reference>